<proteinExistence type="inferred from homology"/>
<feature type="chain" id="PRO_1000164093" description="Acetyl-CoA decarbonylase/synthase complex subunit alpha">
    <location>
        <begin position="1"/>
        <end position="802"/>
    </location>
</feature>
<feature type="domain" description="4Fe-4S ferredoxin-type 1" evidence="1">
    <location>
        <begin position="404"/>
        <end position="432"/>
    </location>
</feature>
<feature type="domain" description="4Fe-4S ferredoxin-type 2" evidence="1">
    <location>
        <begin position="442"/>
        <end position="473"/>
    </location>
</feature>
<feature type="binding site" evidence="1">
    <location>
        <position position="69"/>
    </location>
    <ligand>
        <name>[4Fe-4S] cluster</name>
        <dbReference type="ChEBI" id="CHEBI:49883"/>
        <label>1</label>
        <note>ligand shared between dimeric partners</note>
    </ligand>
</feature>
<feature type="binding site" evidence="1">
    <location>
        <position position="72"/>
    </location>
    <ligand>
        <name>[4Fe-4S] cluster</name>
        <dbReference type="ChEBI" id="CHEBI:49883"/>
        <label>2</label>
    </ligand>
</feature>
<feature type="binding site" evidence="1">
    <location>
        <position position="73"/>
    </location>
    <ligand>
        <name>[4Fe-4S] cluster</name>
        <dbReference type="ChEBI" id="CHEBI:49883"/>
        <label>1</label>
        <note>ligand shared between dimeric partners</note>
    </ligand>
</feature>
<feature type="binding site" evidence="1">
    <location>
        <position position="75"/>
    </location>
    <ligand>
        <name>[4Fe-4S] cluster</name>
        <dbReference type="ChEBI" id="CHEBI:49883"/>
        <label>2</label>
    </ligand>
</feature>
<feature type="binding site" evidence="1">
    <location>
        <position position="80"/>
    </location>
    <ligand>
        <name>[4Fe-4S] cluster</name>
        <dbReference type="ChEBI" id="CHEBI:49883"/>
        <label>2</label>
    </ligand>
</feature>
<feature type="binding site" evidence="1">
    <location>
        <position position="90"/>
    </location>
    <ligand>
        <name>[4Fe-4S] cluster</name>
        <dbReference type="ChEBI" id="CHEBI:49883"/>
        <label>2</label>
    </ligand>
</feature>
<feature type="binding site" evidence="1">
    <location>
        <position position="113"/>
    </location>
    <ligand>
        <name>CO</name>
        <dbReference type="ChEBI" id="CHEBI:17245"/>
    </ligand>
</feature>
<feature type="binding site" evidence="1">
    <location>
        <position position="246"/>
    </location>
    <ligand>
        <name>[Ni-4Fe-4S] cluster</name>
        <dbReference type="ChEBI" id="CHEBI:47739"/>
    </ligand>
</feature>
<feature type="binding site" evidence="1">
    <location>
        <position position="274"/>
    </location>
    <ligand>
        <name>[Ni-4Fe-4S] cluster</name>
        <dbReference type="ChEBI" id="CHEBI:47739"/>
    </ligand>
</feature>
<feature type="binding site" evidence="1">
    <location>
        <position position="319"/>
    </location>
    <ligand>
        <name>[Ni-4Fe-4S] cluster</name>
        <dbReference type="ChEBI" id="CHEBI:47739"/>
    </ligand>
</feature>
<feature type="binding site" evidence="1">
    <location>
        <position position="413"/>
    </location>
    <ligand>
        <name>[4Fe-4S] cluster</name>
        <dbReference type="ChEBI" id="CHEBI:49883"/>
        <label>3</label>
    </ligand>
</feature>
<feature type="binding site" evidence="1">
    <location>
        <position position="416"/>
    </location>
    <ligand>
        <name>[4Fe-4S] cluster</name>
        <dbReference type="ChEBI" id="CHEBI:49883"/>
        <label>3</label>
    </ligand>
</feature>
<feature type="binding site" evidence="1">
    <location>
        <position position="419"/>
    </location>
    <ligand>
        <name>[4Fe-4S] cluster</name>
        <dbReference type="ChEBI" id="CHEBI:49883"/>
        <label>3</label>
    </ligand>
</feature>
<feature type="binding site" evidence="1">
    <location>
        <position position="423"/>
    </location>
    <ligand>
        <name>[4Fe-4S] cluster</name>
        <dbReference type="ChEBI" id="CHEBI:49883"/>
        <label>4</label>
    </ligand>
</feature>
<feature type="binding site" evidence="1">
    <location>
        <position position="451"/>
    </location>
    <ligand>
        <name>[4Fe-4S] cluster</name>
        <dbReference type="ChEBI" id="CHEBI:49883"/>
        <label>4</label>
    </ligand>
</feature>
<feature type="binding site" evidence="1">
    <location>
        <position position="454"/>
    </location>
    <ligand>
        <name>[4Fe-4S] cluster</name>
        <dbReference type="ChEBI" id="CHEBI:49883"/>
        <label>4</label>
    </ligand>
</feature>
<feature type="binding site" evidence="1">
    <location>
        <position position="457"/>
    </location>
    <ligand>
        <name>[4Fe-4S] cluster</name>
        <dbReference type="ChEBI" id="CHEBI:49883"/>
        <label>4</label>
    </ligand>
</feature>
<feature type="binding site" evidence="1">
    <location>
        <position position="461"/>
    </location>
    <ligand>
        <name>[4Fe-4S] cluster</name>
        <dbReference type="ChEBI" id="CHEBI:49883"/>
        <label>3</label>
    </ligand>
</feature>
<feature type="binding site" evidence="1">
    <location>
        <position position="519"/>
    </location>
    <ligand>
        <name>[Ni-4Fe-4S] cluster</name>
        <dbReference type="ChEBI" id="CHEBI:47739"/>
    </ligand>
</feature>
<feature type="binding site" evidence="1">
    <location>
        <position position="548"/>
    </location>
    <ligand>
        <name>[Ni-4Fe-4S] cluster</name>
        <dbReference type="ChEBI" id="CHEBI:47739"/>
    </ligand>
</feature>
<feature type="binding site" evidence="1">
    <location>
        <position position="583"/>
    </location>
    <ligand>
        <name>[Ni-4Fe-4S] cluster</name>
        <dbReference type="ChEBI" id="CHEBI:47739"/>
    </ligand>
</feature>
<gene>
    <name evidence="1" type="primary">cdhA</name>
    <name type="ordered locus">Mbur_0858</name>
</gene>
<accession>Q12XL7</accession>
<sequence>MSELTTGRFSISDLDNVQITINNIVGAIEKQSDDIDVEMGPTVKPGVSSLRDWDHNILDRYNPVYTPMCDQCCYCTFGPCDLSGNKEGACGINLEGHNAREFMLRVITGAAAHSGHGRHLLHHLIGLYGKDHPLDVGATNIIAPNVQLVTGVQPKTLGDLDSVLSYVEEQITQLLAAIHVGQEGAAIDFESKALHGGMIDHVGMEISDIAQISCLDFPKSDEEAPLADIGMGCLDASKPTLIVIGHNVAAVTDIIDYMEDKGLNDKIELGGLCCTALDMTRYKTGDRTLPRAKVVGTLAKELKTIRSGIPDVIIVDEQCIRADVLKEASKLMIPVITTNDKVMYGLKDRSNDSIEDILEDLTTGKEKGALMFDYVKLGELAPRLTMMMSEIRKQKGIKALPTDEELKELADSCVHCLKCEVACPNSLPISEAMTALSEGDLSKFELLHDKCIACGRCEYACPKDIDIVNVIEKSSQRVISEEVGKVRVGRGPISDPEIREEGVNLVLGTTPGIVALVGCSNYPDGTKDLFTIADEMLRRSYIVVVSGCSAMDLGMYKGEDGLTLYEKYPSRFKSGGLLNTGSCVSNAHITGAVIKVASIFAQKNISGNYEEIADYTLNRVGAVGVAWGAYSQKAASIGTGCSRLGIPVILGPHGSKYRRALIAKPYEEEKWKVYDARNGSEMQIPAAPDYLLTTAETVEEMMPMLAKSCIRPSDNNMGRMIKLTHYMELSQKYLGIMPEDWYKFVRTETDLPLAKREKLLKILEEEHGWEIDWKRKKILSGPTMKSDVSAQPTNLKRLCKEA</sequence>
<dbReference type="EC" id="1.2.7.4" evidence="1"/>
<dbReference type="EMBL" id="CP000300">
    <property type="protein sequence ID" value="ABE51809.1"/>
    <property type="molecule type" value="Genomic_DNA"/>
</dbReference>
<dbReference type="RefSeq" id="WP_011498962.1">
    <property type="nucleotide sequence ID" value="NC_007955.1"/>
</dbReference>
<dbReference type="SMR" id="Q12XL7"/>
<dbReference type="STRING" id="259564.Mbur_0858"/>
<dbReference type="GeneID" id="3996856"/>
<dbReference type="KEGG" id="mbu:Mbur_0858"/>
<dbReference type="HOGENOM" id="CLU_361186_0_0_2"/>
<dbReference type="OrthoDB" id="35334at2157"/>
<dbReference type="UniPathway" id="UPA00642"/>
<dbReference type="Proteomes" id="UP000001979">
    <property type="component" value="Chromosome"/>
</dbReference>
<dbReference type="GO" id="GO:0051539">
    <property type="term" value="F:4 iron, 4 sulfur cluster binding"/>
    <property type="evidence" value="ECO:0007669"/>
    <property type="project" value="UniProtKB-KW"/>
</dbReference>
<dbReference type="GO" id="GO:0043885">
    <property type="term" value="F:anaerobic carbon-monoxide dehydrogenase activity"/>
    <property type="evidence" value="ECO:0007669"/>
    <property type="project" value="UniProtKB-UniRule"/>
</dbReference>
<dbReference type="GO" id="GO:0050418">
    <property type="term" value="F:hydroxylamine reductase activity"/>
    <property type="evidence" value="ECO:0007669"/>
    <property type="project" value="TreeGrafter"/>
</dbReference>
<dbReference type="GO" id="GO:0005506">
    <property type="term" value="F:iron ion binding"/>
    <property type="evidence" value="ECO:0007669"/>
    <property type="project" value="UniProtKB-UniRule"/>
</dbReference>
<dbReference type="GO" id="GO:0016151">
    <property type="term" value="F:nickel cation binding"/>
    <property type="evidence" value="ECO:0007669"/>
    <property type="project" value="UniProtKB-UniRule"/>
</dbReference>
<dbReference type="GO" id="GO:0004601">
    <property type="term" value="F:peroxidase activity"/>
    <property type="evidence" value="ECO:0007669"/>
    <property type="project" value="TreeGrafter"/>
</dbReference>
<dbReference type="GO" id="GO:0006084">
    <property type="term" value="P:acetyl-CoA metabolic process"/>
    <property type="evidence" value="ECO:0007669"/>
    <property type="project" value="InterPro"/>
</dbReference>
<dbReference type="GO" id="GO:0019385">
    <property type="term" value="P:methanogenesis, from acetate"/>
    <property type="evidence" value="ECO:0007669"/>
    <property type="project" value="UniProtKB-UniRule"/>
</dbReference>
<dbReference type="GO" id="GO:0042542">
    <property type="term" value="P:response to hydrogen peroxide"/>
    <property type="evidence" value="ECO:0007669"/>
    <property type="project" value="TreeGrafter"/>
</dbReference>
<dbReference type="FunFam" id="1.10.8.190:FF:000001">
    <property type="entry name" value="Acetyl-CoA decarbonylase/synthase complex subunit alpha 1"/>
    <property type="match status" value="1"/>
</dbReference>
<dbReference type="FunFam" id="3.40.50.2030:FF:000004">
    <property type="entry name" value="Acetyl-CoA decarbonylase/synthase complex subunit alpha 1"/>
    <property type="match status" value="1"/>
</dbReference>
<dbReference type="FunFam" id="3.40.50.2030:FF:000006">
    <property type="entry name" value="Acetyl-CoA decarbonylase/synthase complex subunit alpha 1"/>
    <property type="match status" value="1"/>
</dbReference>
<dbReference type="Gene3D" id="3.30.70.20">
    <property type="match status" value="1"/>
</dbReference>
<dbReference type="Gene3D" id="3.40.50.2030">
    <property type="match status" value="2"/>
</dbReference>
<dbReference type="Gene3D" id="1.10.8.190">
    <property type="entry name" value="Carbon monoxide dehydrogenase alpha subunit. Chain M, domain 1"/>
    <property type="match status" value="1"/>
</dbReference>
<dbReference type="HAMAP" id="MF_01137">
    <property type="entry name" value="CdhA"/>
    <property type="match status" value="1"/>
</dbReference>
<dbReference type="InterPro" id="IPR017896">
    <property type="entry name" value="4Fe4S_Fe-S-bd"/>
</dbReference>
<dbReference type="InterPro" id="IPR017900">
    <property type="entry name" value="4Fe4S_Fe_S_CS"/>
</dbReference>
<dbReference type="InterPro" id="IPR004460">
    <property type="entry name" value="CdhA"/>
</dbReference>
<dbReference type="InterPro" id="IPR004137">
    <property type="entry name" value="HCP/CODH"/>
</dbReference>
<dbReference type="InterPro" id="IPR016099">
    <property type="entry name" value="Prismane-like_a/b-sand"/>
</dbReference>
<dbReference type="InterPro" id="IPR011254">
    <property type="entry name" value="Prismane-like_sf"/>
</dbReference>
<dbReference type="NCBIfam" id="TIGR00314">
    <property type="entry name" value="cdhA"/>
    <property type="match status" value="1"/>
</dbReference>
<dbReference type="PANTHER" id="PTHR30109:SF6">
    <property type="entry name" value="ACETYL-COA DECARBONYLASE_SYNTHASE COMPLEX SUBUNIT ALPHA"/>
    <property type="match status" value="1"/>
</dbReference>
<dbReference type="PANTHER" id="PTHR30109">
    <property type="entry name" value="HYDROXYLAMINE REDUCTASE"/>
    <property type="match status" value="1"/>
</dbReference>
<dbReference type="Pfam" id="PF12838">
    <property type="entry name" value="Fer4_7"/>
    <property type="match status" value="1"/>
</dbReference>
<dbReference type="Pfam" id="PF03063">
    <property type="entry name" value="Prismane"/>
    <property type="match status" value="2"/>
</dbReference>
<dbReference type="SUPFAM" id="SSF46548">
    <property type="entry name" value="alpha-helical ferredoxin"/>
    <property type="match status" value="1"/>
</dbReference>
<dbReference type="SUPFAM" id="SSF56821">
    <property type="entry name" value="Prismane protein-like"/>
    <property type="match status" value="1"/>
</dbReference>
<dbReference type="PROSITE" id="PS00198">
    <property type="entry name" value="4FE4S_FER_1"/>
    <property type="match status" value="2"/>
</dbReference>
<dbReference type="PROSITE" id="PS51379">
    <property type="entry name" value="4FE4S_FER_2"/>
    <property type="match status" value="2"/>
</dbReference>
<reference key="1">
    <citation type="journal article" date="2009" name="ISME J.">
        <title>The genome sequence of the psychrophilic archaeon, Methanococcoides burtonii: the role of genome evolution in cold adaptation.</title>
        <authorList>
            <person name="Allen M.A."/>
            <person name="Lauro F.M."/>
            <person name="Williams T.J."/>
            <person name="Burg D."/>
            <person name="Siddiqui K.S."/>
            <person name="De Francisci D."/>
            <person name="Chong K.W."/>
            <person name="Pilak O."/>
            <person name="Chew H.H."/>
            <person name="De Maere M.Z."/>
            <person name="Ting L."/>
            <person name="Katrib M."/>
            <person name="Ng C."/>
            <person name="Sowers K.R."/>
            <person name="Galperin M.Y."/>
            <person name="Anderson I.J."/>
            <person name="Ivanova N."/>
            <person name="Dalin E."/>
            <person name="Martinez M."/>
            <person name="Lapidus A."/>
            <person name="Hauser L."/>
            <person name="Land M."/>
            <person name="Thomas T."/>
            <person name="Cavicchioli R."/>
        </authorList>
    </citation>
    <scope>NUCLEOTIDE SEQUENCE [LARGE SCALE GENOMIC DNA]</scope>
    <source>
        <strain>DSM 6242 / NBRC 107633 / OCM 468 / ACE-M</strain>
    </source>
</reference>
<comment type="function">
    <text evidence="1">Part of the ACDS complex that catalyzes the reversible cleavage of acetyl-CoA, allowing growth on acetate as sole source of carbon and energy. The alpha-epsilon subcomponent functions as a carbon monoxide dehydrogenase.</text>
</comment>
<comment type="catalytic activity">
    <reaction evidence="1">
        <text>CO + 2 oxidized [2Fe-2S]-[ferredoxin] + H2O = 2 reduced [2Fe-2S]-[ferredoxin] + CO2 + 2 H(+)</text>
        <dbReference type="Rhea" id="RHEA:21040"/>
        <dbReference type="Rhea" id="RHEA-COMP:10000"/>
        <dbReference type="Rhea" id="RHEA-COMP:10001"/>
        <dbReference type="ChEBI" id="CHEBI:15377"/>
        <dbReference type="ChEBI" id="CHEBI:15378"/>
        <dbReference type="ChEBI" id="CHEBI:16526"/>
        <dbReference type="ChEBI" id="CHEBI:17245"/>
        <dbReference type="ChEBI" id="CHEBI:33737"/>
        <dbReference type="ChEBI" id="CHEBI:33738"/>
        <dbReference type="EC" id="1.2.7.4"/>
    </reaction>
</comment>
<comment type="cofactor">
    <cofactor evidence="1">
        <name>[4Fe-4S] cluster</name>
        <dbReference type="ChEBI" id="CHEBI:49883"/>
    </cofactor>
    <text evidence="1">Binds 7 [4Fe-4S] clusters per heterotetramer.</text>
</comment>
<comment type="cofactor">
    <cofactor evidence="1">
        <name>[Ni-4Fe-4S] cluster</name>
        <dbReference type="ChEBI" id="CHEBI:47739"/>
    </cofactor>
    <text evidence="1">Binds 2 [Ni-4Fe-4S] clusters per heterotetramer.</text>
</comment>
<comment type="pathway">
    <text evidence="1">One-carbon metabolism; methanogenesis from acetate.</text>
</comment>
<comment type="subunit">
    <text evidence="1">Heterotetramer of two alpha and two epsilon subunits. The ACDS complex is made up of alpha, epsilon, beta, gamma and delta subunits with a probable stoichiometry of (alpha(2)epsilon(2))(4)-beta(8)-(gamma(1)delta(1))(8).</text>
</comment>
<comment type="domain">
    <text evidence="1">Cluster B is an all-cysteinyl-liganded 4Fe-4S cluster; cluster C is a mixed Ni-Fe-S cluster which is the active site of CO oxidation. Cluster D is also an all-cysteinyl-liganded 4Fe-4S cluster that bridges the two subunits of the CODH dimer. Contains two additional 4Fe-4S clusters, dubbed E and F, that probably transport electrons from ferredoxin to the B cluster.</text>
</comment>
<comment type="similarity">
    <text evidence="1">Belongs to the Ni-containing carbon monoxide dehydrogenase family.</text>
</comment>
<name>ACDA_METBU</name>
<organism>
    <name type="scientific">Methanococcoides burtonii (strain DSM 6242 / NBRC 107633 / OCM 468 / ACE-M)</name>
    <dbReference type="NCBI Taxonomy" id="259564"/>
    <lineage>
        <taxon>Archaea</taxon>
        <taxon>Methanobacteriati</taxon>
        <taxon>Methanobacteriota</taxon>
        <taxon>Stenosarchaea group</taxon>
        <taxon>Methanomicrobia</taxon>
        <taxon>Methanosarcinales</taxon>
        <taxon>Methanosarcinaceae</taxon>
        <taxon>Methanococcoides</taxon>
    </lineage>
</organism>
<protein>
    <recommendedName>
        <fullName evidence="1">Acetyl-CoA decarbonylase/synthase complex subunit alpha</fullName>
        <shortName evidence="1">ACDS complex subunit alpha</shortName>
        <ecNumber evidence="1">1.2.7.4</ecNumber>
    </recommendedName>
    <alternativeName>
        <fullName evidence="1">ACDS complex carbon monoxide dehydrogenase subunit alpha</fullName>
        <shortName evidence="1">ACDS CODH subunit alpha</shortName>
    </alternativeName>
</protein>
<evidence type="ECO:0000255" key="1">
    <source>
        <dbReference type="HAMAP-Rule" id="MF_01137"/>
    </source>
</evidence>
<keyword id="KW-0004">4Fe-4S</keyword>
<keyword id="KW-0408">Iron</keyword>
<keyword id="KW-0411">Iron-sulfur</keyword>
<keyword id="KW-0479">Metal-binding</keyword>
<keyword id="KW-0484">Methanogenesis</keyword>
<keyword id="KW-0533">Nickel</keyword>
<keyword id="KW-0560">Oxidoreductase</keyword>
<keyword id="KW-0677">Repeat</keyword>